<accession>Q3LZX8</accession>
<feature type="chain" id="PRO_0000291330" description="ORF6 protein">
    <location>
        <begin position="1"/>
        <end position="63"/>
    </location>
</feature>
<keyword id="KW-1038">Host endoplasmic reticulum</keyword>
<keyword id="KW-1040">Host Golgi apparatus</keyword>
<keyword id="KW-1043">Host membrane</keyword>
<keyword id="KW-0472">Membrane</keyword>
<keyword id="KW-0843">Virulence</keyword>
<organism>
    <name type="scientific">Bat coronavirus HKU3</name>
    <name type="common">BtCoV</name>
    <name type="synonym">SARS-like coronavirus HKU3</name>
    <dbReference type="NCBI Taxonomy" id="442736"/>
    <lineage>
        <taxon>Viruses</taxon>
        <taxon>Riboviria</taxon>
        <taxon>Orthornavirae</taxon>
        <taxon>Pisuviricota</taxon>
        <taxon>Pisoniviricetes</taxon>
        <taxon>Nidovirales</taxon>
        <taxon>Cornidovirineae</taxon>
        <taxon>Coronaviridae</taxon>
        <taxon>Orthocoronavirinae</taxon>
        <taxon>Betacoronavirus</taxon>
        <taxon>Sarbecovirus</taxon>
        <taxon>Severe acute respiratory syndrome coronavirus</taxon>
    </lineage>
</organism>
<protein>
    <recommendedName>
        <fullName>ORF6 protein</fullName>
        <shortName>ORF6</shortName>
    </recommendedName>
    <alternativeName>
        <fullName>Accessory protein 6</fullName>
    </alternativeName>
    <alternativeName>
        <fullName>Non-structural protein 6</fullName>
        <shortName>ns6</shortName>
    </alternativeName>
</protein>
<gene>
    <name type="ORF">6</name>
</gene>
<proteinExistence type="inferred from homology"/>
<organismHost>
    <name type="scientific">Rhinolophus sinicus</name>
    <name type="common">Chinese rufous horseshoe bat</name>
    <dbReference type="NCBI Taxonomy" id="89399"/>
</organismHost>
<comment type="function">
    <text evidence="1">Could be a determinant of virus virulence. Seems to stimulate cellular DNA synthesis in vitro (By similarity).</text>
</comment>
<comment type="subcellular location">
    <subcellularLocation>
        <location evidence="1">Host endoplasmic reticulum membrane</location>
    </subcellularLocation>
    <subcellularLocation>
        <location evidence="1">Host Golgi apparatus membrane</location>
    </subcellularLocation>
</comment>
<comment type="miscellaneous">
    <text>Bat coronavirus HKU3 is highly similar to SARS-CoV (SARS-like).</text>
</comment>
<comment type="similarity">
    <text evidence="2">Belongs to the coronaviruses accessory protein 6 family.</text>
</comment>
<name>NS6_BCHK3</name>
<reference key="1">
    <citation type="journal article" date="2005" name="Proc. Natl. Acad. Sci. U.S.A.">
        <title>Severe acute respiratory syndrome coronavirus-like virus in Chinese horseshoe bats.</title>
        <authorList>
            <person name="Lau S.K.P."/>
            <person name="Woo P.C.Y."/>
            <person name="Li K.S.M."/>
            <person name="Huang Y."/>
            <person name="Tsoi H.-W."/>
            <person name="Wong B.H.L."/>
            <person name="Wong S.S.Y."/>
            <person name="Leung S.-Y."/>
            <person name="Chan K.-H."/>
            <person name="Yuen K.-Y."/>
        </authorList>
    </citation>
    <scope>NUCLEOTIDE SEQUENCE [GENOMIC RNA]</scope>
    <source>
        <strain>Isolate HKU3-1</strain>
    </source>
</reference>
<sequence length="63" mass="7499">MFHLVDFQVTIAEILIIIMKTFRVAIWNLDILISSIVRQLFKPLTKKNYSELDDEEPMELDYP</sequence>
<dbReference type="EMBL" id="DQ022305">
    <property type="protein sequence ID" value="AAY88870.1"/>
    <property type="molecule type" value="Genomic_RNA"/>
</dbReference>
<dbReference type="Proteomes" id="UP000007450">
    <property type="component" value="Segment"/>
</dbReference>
<dbReference type="GO" id="GO:0044167">
    <property type="term" value="C:host cell endoplasmic reticulum membrane"/>
    <property type="evidence" value="ECO:0007669"/>
    <property type="project" value="UniProtKB-SubCell"/>
</dbReference>
<dbReference type="GO" id="GO:0044178">
    <property type="term" value="C:host cell Golgi membrane"/>
    <property type="evidence" value="ECO:0007669"/>
    <property type="project" value="UniProtKB-SubCell"/>
</dbReference>
<dbReference type="GO" id="GO:0016020">
    <property type="term" value="C:membrane"/>
    <property type="evidence" value="ECO:0007669"/>
    <property type="project" value="UniProtKB-KW"/>
</dbReference>
<dbReference type="InterPro" id="IPR022736">
    <property type="entry name" value="NS6_bCoV"/>
</dbReference>
<dbReference type="Pfam" id="PF12133">
    <property type="entry name" value="bCoV_NS6"/>
    <property type="match status" value="1"/>
</dbReference>
<evidence type="ECO:0000250" key="1"/>
<evidence type="ECO:0000305" key="2"/>